<accession>C4YE34</accession>
<gene>
    <name evidence="1" type="primary">MDM34</name>
    <name type="ORF">CAWG_00785</name>
</gene>
<comment type="function">
    <text evidence="1">Component of the ERMES/MDM complex, which serves as a molecular tether to connect the endoplasmic reticulum (ER) and mitochondria. Components of this complex are involved in the control of mitochondrial shape and protein biogenesis, and function in nonvesicular lipid trafficking between the ER and mitochondria. MDM34 is required for the interaction of the ER-resident membrane protein MMM1 and the outer mitochondrial membrane-resident beta-barrel protein MDM10.</text>
</comment>
<comment type="subunit">
    <text evidence="1">Component of the ER-mitochondria encounter structure (ERMES) or MDM complex, composed of MMM1, MDM10, MDM12 and MDM34.</text>
</comment>
<comment type="subcellular location">
    <subcellularLocation>
        <location evidence="1">Mitochondrion outer membrane</location>
        <topology evidence="1">Multi-pass membrane protein</topology>
    </subcellularLocation>
    <text evidence="1">The ERMES/MDM complex localizes to a few discrete foci (around 10 per single cell), that represent mitochondria-endoplasmic reticulum junctions. These foci are often found next to mtDNA nucleoids.</text>
</comment>
<comment type="domain">
    <text evidence="1">Lacks alpha-helical transmembrane segments, suggesting that it resides in the membrane via beta-sheet conformations similar to those predicted for other outer membrane proteins and porin.</text>
</comment>
<comment type="domain">
    <text evidence="1">The SMP-LTD domain is a barrel-like domain that can bind various types of glycerophospholipids in its interior and mediate their transfer between two adjacent bilayers.</text>
</comment>
<comment type="similarity">
    <text evidence="1">Belongs to the MDM34 family.</text>
</comment>
<keyword id="KW-0445">Lipid transport</keyword>
<keyword id="KW-0446">Lipid-binding</keyword>
<keyword id="KW-0472">Membrane</keyword>
<keyword id="KW-0496">Mitochondrion</keyword>
<keyword id="KW-1000">Mitochondrion outer membrane</keyword>
<keyword id="KW-0812">Transmembrane</keyword>
<keyword id="KW-1134">Transmembrane beta strand</keyword>
<keyword id="KW-0813">Transport</keyword>
<proteinExistence type="inferred from homology"/>
<evidence type="ECO:0000255" key="1">
    <source>
        <dbReference type="HAMAP-Rule" id="MF_03105"/>
    </source>
</evidence>
<evidence type="ECO:0000256" key="2">
    <source>
        <dbReference type="SAM" id="MobiDB-lite"/>
    </source>
</evidence>
<name>MDM34_CANAW</name>
<sequence length="622" mass="70115">MSFKVNWNSLETEPLTNWTKELLTSALNSGKSPNILASNITIKDLNFGKIAPDFEILEIGELDRDRFRGIFKIDYQGDFHLTLHTKVQANPLNIYYHNSLEKEVCNYSQDEFITPNFLLSNEQFAIPLDLKLSDIKINGIGIIVFSKSKGLTLVFRNDPLDSIKVSSTFDTVQVLANFLQKQIENQIRDLFRETLPTLIHQLSLKYLSLDNNINEIKSKLSQQDSVSMTNNELASSLKLFDDEENEFPLIYSSKNLQKNMQLFKSRETFRLSVPKFKNIVQRTRLDKFTKSYPNLLNSLYANNADLQHRFVNNINHGHNNNSNTSSNGIPIELLVSHDDKQHYDKTDDLLKDISSIQANNFYKYSNKDAPNKPKRRRIKVHKKSKAKQDDNTVKASELQNVDSTFMDSRSISPQETIDTTSTLIESAPMTRNVSTNIKSPTLETMSTGSSSSASSQVIAHPTPKRAYQPADTTVSTTTINKENHIDYIKARNLYQDFIQMSQSPGYYDKVISNGGGIGLGNSGGNYFGFNGNGNGLERTMSASPIKHLNKDKKSINYIDTSKINEKLNQFRLDGGKNSANTNNSSGGKNFRPGFTRNESNGQQGILFEAFNFPSVAPPPPYC</sequence>
<reference key="1">
    <citation type="journal article" date="2009" name="Nature">
        <title>Evolution of pathogenicity and sexual reproduction in eight Candida genomes.</title>
        <authorList>
            <person name="Butler G."/>
            <person name="Rasmussen M.D."/>
            <person name="Lin M.F."/>
            <person name="Santos M.A.S."/>
            <person name="Sakthikumar S."/>
            <person name="Munro C.A."/>
            <person name="Rheinbay E."/>
            <person name="Grabherr M."/>
            <person name="Forche A."/>
            <person name="Reedy J.L."/>
            <person name="Agrafioti I."/>
            <person name="Arnaud M.B."/>
            <person name="Bates S."/>
            <person name="Brown A.J.P."/>
            <person name="Brunke S."/>
            <person name="Costanzo M.C."/>
            <person name="Fitzpatrick D.A."/>
            <person name="de Groot P.W.J."/>
            <person name="Harris D."/>
            <person name="Hoyer L.L."/>
            <person name="Hube B."/>
            <person name="Klis F.M."/>
            <person name="Kodira C."/>
            <person name="Lennard N."/>
            <person name="Logue M.E."/>
            <person name="Martin R."/>
            <person name="Neiman A.M."/>
            <person name="Nikolaou E."/>
            <person name="Quail M.A."/>
            <person name="Quinn J."/>
            <person name="Santos M.C."/>
            <person name="Schmitzberger F.F."/>
            <person name="Sherlock G."/>
            <person name="Shah P."/>
            <person name="Silverstein K.A.T."/>
            <person name="Skrzypek M.S."/>
            <person name="Soll D."/>
            <person name="Staggs R."/>
            <person name="Stansfield I."/>
            <person name="Stumpf M.P.H."/>
            <person name="Sudbery P.E."/>
            <person name="Srikantha T."/>
            <person name="Zeng Q."/>
            <person name="Berman J."/>
            <person name="Berriman M."/>
            <person name="Heitman J."/>
            <person name="Gow N.A.R."/>
            <person name="Lorenz M.C."/>
            <person name="Birren B.W."/>
            <person name="Kellis M."/>
            <person name="Cuomo C.A."/>
        </authorList>
    </citation>
    <scope>NUCLEOTIDE SEQUENCE [LARGE SCALE GENOMIC DNA]</scope>
    <source>
        <strain>WO-1</strain>
    </source>
</reference>
<protein>
    <recommendedName>
        <fullName evidence="1">Mitochondrial distribution and morphology protein 34</fullName>
    </recommendedName>
</protein>
<feature type="chain" id="PRO_0000384332" description="Mitochondrial distribution and morphology protein 34">
    <location>
        <begin position="1"/>
        <end position="622"/>
    </location>
</feature>
<feature type="domain" description="SMP-LTD" evidence="1">
    <location>
        <begin position="1"/>
        <end position="204"/>
    </location>
</feature>
<feature type="region of interest" description="Disordered" evidence="2">
    <location>
        <begin position="364"/>
        <end position="393"/>
    </location>
</feature>
<feature type="region of interest" description="Disordered" evidence="2">
    <location>
        <begin position="442"/>
        <end position="468"/>
    </location>
</feature>
<feature type="region of interest" description="Disordered" evidence="2">
    <location>
        <begin position="572"/>
        <end position="592"/>
    </location>
</feature>
<feature type="compositionally biased region" description="Basic residues" evidence="2">
    <location>
        <begin position="372"/>
        <end position="385"/>
    </location>
</feature>
<feature type="compositionally biased region" description="Low complexity" evidence="2">
    <location>
        <begin position="446"/>
        <end position="455"/>
    </location>
</feature>
<feature type="compositionally biased region" description="Polar residues" evidence="2">
    <location>
        <begin position="577"/>
        <end position="587"/>
    </location>
</feature>
<dbReference type="EMBL" id="CH672346">
    <property type="protein sequence ID" value="EEQ42570.1"/>
    <property type="molecule type" value="Genomic_DNA"/>
</dbReference>
<dbReference type="SMR" id="C4YE34"/>
<dbReference type="PaxDb" id="5476-C4YE34"/>
<dbReference type="VEuPathDB" id="FungiDB:CAWG_00785"/>
<dbReference type="HOGENOM" id="CLU_476594_0_0_1"/>
<dbReference type="OMA" id="PGCLERQ"/>
<dbReference type="OrthoDB" id="17054at766764"/>
<dbReference type="Proteomes" id="UP000001429">
    <property type="component" value="Chromosome 1, Supercontig 1.1"/>
</dbReference>
<dbReference type="GO" id="GO:0032865">
    <property type="term" value="C:ERMES complex"/>
    <property type="evidence" value="ECO:0007669"/>
    <property type="project" value="UniProtKB-UniRule"/>
</dbReference>
<dbReference type="GO" id="GO:0008289">
    <property type="term" value="F:lipid binding"/>
    <property type="evidence" value="ECO:0007669"/>
    <property type="project" value="UniProtKB-KW"/>
</dbReference>
<dbReference type="GO" id="GO:0000002">
    <property type="term" value="P:mitochondrial genome maintenance"/>
    <property type="evidence" value="ECO:0007669"/>
    <property type="project" value="UniProtKB-UniRule"/>
</dbReference>
<dbReference type="GO" id="GO:1990456">
    <property type="term" value="P:mitochondrion-endoplasmic reticulum membrane tethering"/>
    <property type="evidence" value="ECO:0007669"/>
    <property type="project" value="TreeGrafter"/>
</dbReference>
<dbReference type="GO" id="GO:0015914">
    <property type="term" value="P:phospholipid transport"/>
    <property type="evidence" value="ECO:0007669"/>
    <property type="project" value="TreeGrafter"/>
</dbReference>
<dbReference type="CDD" id="cd21673">
    <property type="entry name" value="SMP_Mdm34"/>
    <property type="match status" value="1"/>
</dbReference>
<dbReference type="HAMAP" id="MF_03105">
    <property type="entry name" value="Mdm34"/>
    <property type="match status" value="1"/>
</dbReference>
<dbReference type="InterPro" id="IPR027536">
    <property type="entry name" value="Mdm34"/>
</dbReference>
<dbReference type="InterPro" id="IPR031468">
    <property type="entry name" value="SMP_LBD"/>
</dbReference>
<dbReference type="PANTHER" id="PTHR28185">
    <property type="entry name" value="MITOCHONDRIAL DISTRIBUTION AND MORPHOLOGY PROTEIN 34"/>
    <property type="match status" value="1"/>
</dbReference>
<dbReference type="PANTHER" id="PTHR28185:SF1">
    <property type="entry name" value="MITOCHONDRIAL DISTRIBUTION AND MORPHOLOGY PROTEIN 34"/>
    <property type="match status" value="1"/>
</dbReference>
<dbReference type="PROSITE" id="PS51847">
    <property type="entry name" value="SMP"/>
    <property type="match status" value="1"/>
</dbReference>
<organism>
    <name type="scientific">Candida albicans (strain WO-1)</name>
    <name type="common">Yeast</name>
    <dbReference type="NCBI Taxonomy" id="294748"/>
    <lineage>
        <taxon>Eukaryota</taxon>
        <taxon>Fungi</taxon>
        <taxon>Dikarya</taxon>
        <taxon>Ascomycota</taxon>
        <taxon>Saccharomycotina</taxon>
        <taxon>Pichiomycetes</taxon>
        <taxon>Debaryomycetaceae</taxon>
        <taxon>Candida/Lodderomyces clade</taxon>
        <taxon>Candida</taxon>
    </lineage>
</organism>